<evidence type="ECO:0000255" key="1">
    <source>
        <dbReference type="HAMAP-Rule" id="MF_00057"/>
    </source>
</evidence>
<comment type="function">
    <text evidence="1">Activates KDO (a required 8-carbon sugar) for incorporation into bacterial lipopolysaccharide in Gram-negative bacteria.</text>
</comment>
<comment type="catalytic activity">
    <reaction evidence="1">
        <text>3-deoxy-alpha-D-manno-oct-2-ulosonate + CTP = CMP-3-deoxy-beta-D-manno-octulosonate + diphosphate</text>
        <dbReference type="Rhea" id="RHEA:23448"/>
        <dbReference type="ChEBI" id="CHEBI:33019"/>
        <dbReference type="ChEBI" id="CHEBI:37563"/>
        <dbReference type="ChEBI" id="CHEBI:85986"/>
        <dbReference type="ChEBI" id="CHEBI:85987"/>
        <dbReference type="EC" id="2.7.7.38"/>
    </reaction>
</comment>
<comment type="pathway">
    <text evidence="1">Nucleotide-sugar biosynthesis; CMP-3-deoxy-D-manno-octulosonate biosynthesis; CMP-3-deoxy-D-manno-octulosonate from 3-deoxy-D-manno-octulosonate and CTP: step 1/1.</text>
</comment>
<comment type="pathway">
    <text evidence="1">Bacterial outer membrane biogenesis; lipopolysaccharide biosynthesis.</text>
</comment>
<comment type="subcellular location">
    <subcellularLocation>
        <location evidence="1">Cytoplasm</location>
    </subcellularLocation>
</comment>
<comment type="similarity">
    <text evidence="1">Belongs to the KdsB family.</text>
</comment>
<proteinExistence type="inferred from homology"/>
<protein>
    <recommendedName>
        <fullName evidence="1">3-deoxy-manno-octulosonate cytidylyltransferase</fullName>
        <ecNumber evidence="1">2.7.7.38</ecNumber>
    </recommendedName>
    <alternativeName>
        <fullName evidence="1">CMP-2-keto-3-deoxyoctulosonic acid synthase</fullName>
        <shortName evidence="1">CKS</shortName>
        <shortName evidence="1">CMP-KDO synthase</shortName>
    </alternativeName>
</protein>
<name>KDSB_METCA</name>
<gene>
    <name evidence="1" type="primary">kdsB</name>
    <name type="ordered locus">MCA0635</name>
</gene>
<keyword id="KW-0963">Cytoplasm</keyword>
<keyword id="KW-0448">Lipopolysaccharide biosynthesis</keyword>
<keyword id="KW-0548">Nucleotidyltransferase</keyword>
<keyword id="KW-1185">Reference proteome</keyword>
<keyword id="KW-0808">Transferase</keyword>
<feature type="chain" id="PRO_1000003368" description="3-deoxy-manno-octulosonate cytidylyltransferase">
    <location>
        <begin position="1"/>
        <end position="257"/>
    </location>
</feature>
<dbReference type="EC" id="2.7.7.38" evidence="1"/>
<dbReference type="EMBL" id="AE017282">
    <property type="protein sequence ID" value="AAU93069.1"/>
    <property type="molecule type" value="Genomic_DNA"/>
</dbReference>
<dbReference type="RefSeq" id="WP_010959979.1">
    <property type="nucleotide sequence ID" value="NC_002977.6"/>
</dbReference>
<dbReference type="SMR" id="Q60B47"/>
<dbReference type="STRING" id="243233.MCA0635"/>
<dbReference type="GeneID" id="88222964"/>
<dbReference type="KEGG" id="mca:MCA0635"/>
<dbReference type="eggNOG" id="COG1212">
    <property type="taxonomic scope" value="Bacteria"/>
</dbReference>
<dbReference type="HOGENOM" id="CLU_065038_1_0_6"/>
<dbReference type="UniPathway" id="UPA00030"/>
<dbReference type="UniPathway" id="UPA00358">
    <property type="reaction ID" value="UER00476"/>
</dbReference>
<dbReference type="Proteomes" id="UP000006821">
    <property type="component" value="Chromosome"/>
</dbReference>
<dbReference type="GO" id="GO:0005829">
    <property type="term" value="C:cytosol"/>
    <property type="evidence" value="ECO:0007669"/>
    <property type="project" value="TreeGrafter"/>
</dbReference>
<dbReference type="GO" id="GO:0008690">
    <property type="term" value="F:3-deoxy-manno-octulosonate cytidylyltransferase activity"/>
    <property type="evidence" value="ECO:0007669"/>
    <property type="project" value="UniProtKB-UniRule"/>
</dbReference>
<dbReference type="GO" id="GO:0033468">
    <property type="term" value="P:CMP-keto-3-deoxy-D-manno-octulosonic acid biosynthetic process"/>
    <property type="evidence" value="ECO:0007669"/>
    <property type="project" value="UniProtKB-UniRule"/>
</dbReference>
<dbReference type="GO" id="GO:0009103">
    <property type="term" value="P:lipopolysaccharide biosynthetic process"/>
    <property type="evidence" value="ECO:0007669"/>
    <property type="project" value="UniProtKB-UniRule"/>
</dbReference>
<dbReference type="CDD" id="cd02517">
    <property type="entry name" value="CMP-KDO-Synthetase"/>
    <property type="match status" value="1"/>
</dbReference>
<dbReference type="FunFam" id="3.90.550.10:FF:000011">
    <property type="entry name" value="3-deoxy-manno-octulosonate cytidylyltransferase"/>
    <property type="match status" value="1"/>
</dbReference>
<dbReference type="Gene3D" id="3.90.550.10">
    <property type="entry name" value="Spore Coat Polysaccharide Biosynthesis Protein SpsA, Chain A"/>
    <property type="match status" value="1"/>
</dbReference>
<dbReference type="HAMAP" id="MF_00057">
    <property type="entry name" value="KdsB"/>
    <property type="match status" value="1"/>
</dbReference>
<dbReference type="InterPro" id="IPR003329">
    <property type="entry name" value="Cytidylyl_trans"/>
</dbReference>
<dbReference type="InterPro" id="IPR004528">
    <property type="entry name" value="KdsB"/>
</dbReference>
<dbReference type="InterPro" id="IPR029044">
    <property type="entry name" value="Nucleotide-diphossugar_trans"/>
</dbReference>
<dbReference type="NCBIfam" id="TIGR00466">
    <property type="entry name" value="kdsB"/>
    <property type="match status" value="1"/>
</dbReference>
<dbReference type="NCBIfam" id="NF003950">
    <property type="entry name" value="PRK05450.1-3"/>
    <property type="match status" value="1"/>
</dbReference>
<dbReference type="NCBIfam" id="NF003952">
    <property type="entry name" value="PRK05450.1-5"/>
    <property type="match status" value="1"/>
</dbReference>
<dbReference type="NCBIfam" id="NF009905">
    <property type="entry name" value="PRK13368.1"/>
    <property type="match status" value="1"/>
</dbReference>
<dbReference type="PANTHER" id="PTHR42866">
    <property type="entry name" value="3-DEOXY-MANNO-OCTULOSONATE CYTIDYLYLTRANSFERASE"/>
    <property type="match status" value="1"/>
</dbReference>
<dbReference type="PANTHER" id="PTHR42866:SF2">
    <property type="entry name" value="3-DEOXY-MANNO-OCTULOSONATE CYTIDYLYLTRANSFERASE, MITOCHONDRIAL"/>
    <property type="match status" value="1"/>
</dbReference>
<dbReference type="Pfam" id="PF02348">
    <property type="entry name" value="CTP_transf_3"/>
    <property type="match status" value="1"/>
</dbReference>
<dbReference type="SUPFAM" id="SSF53448">
    <property type="entry name" value="Nucleotide-diphospho-sugar transferases"/>
    <property type="match status" value="1"/>
</dbReference>
<accession>Q60B47</accession>
<sequence>MPADFTIVIPARYGSTRLPGKPLLELGGKPMIAHVCERALEAGAAEVVVATDDARIAEAVDGLPVTAMLTRTEHASGTERLAEVAERRAWSDDTLVVNLQGDEPFMDAALLRALAEALGRREDCRVATLAAPIHRPEEIFDPNVVKVVTDGENRALYFSRAAVPWDRESFAEGAGVPMPGMPYRRHIGVYAYTASYLRRYVDLEPSPLEHVERLEQLRILWHGDRILVVPVEGAPAPGVDTAADLERARRHLSGRTP</sequence>
<reference key="1">
    <citation type="journal article" date="2004" name="PLoS Biol.">
        <title>Genomic insights into methanotrophy: the complete genome sequence of Methylococcus capsulatus (Bath).</title>
        <authorList>
            <person name="Ward N.L."/>
            <person name="Larsen O."/>
            <person name="Sakwa J."/>
            <person name="Bruseth L."/>
            <person name="Khouri H.M."/>
            <person name="Durkin A.S."/>
            <person name="Dimitrov G."/>
            <person name="Jiang L."/>
            <person name="Scanlan D."/>
            <person name="Kang K.H."/>
            <person name="Lewis M.R."/>
            <person name="Nelson K.E."/>
            <person name="Methe B.A."/>
            <person name="Wu M."/>
            <person name="Heidelberg J.F."/>
            <person name="Paulsen I.T."/>
            <person name="Fouts D.E."/>
            <person name="Ravel J."/>
            <person name="Tettelin H."/>
            <person name="Ren Q."/>
            <person name="Read T.D."/>
            <person name="DeBoy R.T."/>
            <person name="Seshadri R."/>
            <person name="Salzberg S.L."/>
            <person name="Jensen H.B."/>
            <person name="Birkeland N.K."/>
            <person name="Nelson W.C."/>
            <person name="Dodson R.J."/>
            <person name="Grindhaug S.H."/>
            <person name="Holt I.E."/>
            <person name="Eidhammer I."/>
            <person name="Jonasen I."/>
            <person name="Vanaken S."/>
            <person name="Utterback T.R."/>
            <person name="Feldblyum T.V."/>
            <person name="Fraser C.M."/>
            <person name="Lillehaug J.R."/>
            <person name="Eisen J.A."/>
        </authorList>
    </citation>
    <scope>NUCLEOTIDE SEQUENCE [LARGE SCALE GENOMIC DNA]</scope>
    <source>
        <strain>ATCC 33009 / NCIMB 11132 / Bath</strain>
    </source>
</reference>
<organism>
    <name type="scientific">Methylococcus capsulatus (strain ATCC 33009 / NCIMB 11132 / Bath)</name>
    <dbReference type="NCBI Taxonomy" id="243233"/>
    <lineage>
        <taxon>Bacteria</taxon>
        <taxon>Pseudomonadati</taxon>
        <taxon>Pseudomonadota</taxon>
        <taxon>Gammaproteobacteria</taxon>
        <taxon>Methylococcales</taxon>
        <taxon>Methylococcaceae</taxon>
        <taxon>Methylococcus</taxon>
    </lineage>
</organism>